<evidence type="ECO:0000250" key="1">
    <source>
        <dbReference type="UniProtKB" id="P01783"/>
    </source>
</evidence>
<evidence type="ECO:0000255" key="2"/>
<evidence type="ECO:0000255" key="3">
    <source>
        <dbReference type="PROSITE-ProRule" id="PRU00114"/>
    </source>
</evidence>
<evidence type="ECO:0000269" key="4">
    <source>
    </source>
</evidence>
<evidence type="ECO:0000269" key="5">
    <source ref="2"/>
</evidence>
<evidence type="ECO:0000303" key="6">
    <source>
    </source>
</evidence>
<evidence type="ECO:0000305" key="7"/>
<reference evidence="7" key="1">
    <citation type="journal article" date="2004" name="BMC Immunol.">
        <title>Diversity and repertoire of IgW and IgM VH families in the newborn nurse shark.</title>
        <authorList>
            <person name="Rumfelt L.L."/>
            <person name="Lohr R.L."/>
            <person name="Dooley H."/>
            <person name="Flajnik M.F."/>
        </authorList>
    </citation>
    <scope>NUCLEOTIDE SEQUENCE</scope>
    <source>
        <tissue evidence="4">Spleen</tissue>
    </source>
</reference>
<reference evidence="7" key="2">
    <citation type="submission" date="2004-04" db="UniProtKB">
        <authorList>
            <person name="Rumfelt L.L."/>
            <person name="Lohr R.L."/>
            <person name="Dooley H."/>
            <person name="Flajnik M.F."/>
        </authorList>
    </citation>
    <scope>TISSUE SPECIFICITY</scope>
</reference>
<name>IGW3_HETFR</name>
<comment type="tissue specificity">
    <text evidence="4 5">Expressed mainly in lymphoid tissues including spleen, epigonal organ and circulating lymphocytes.</text>
</comment>
<proteinExistence type="evidence at transcript level"/>
<accession>P83907</accession>
<dbReference type="SMR" id="P83907"/>
<dbReference type="GO" id="GO:0005576">
    <property type="term" value="C:extracellular region"/>
    <property type="evidence" value="ECO:0007669"/>
    <property type="project" value="UniProtKB-ARBA"/>
</dbReference>
<dbReference type="GO" id="GO:0019814">
    <property type="term" value="C:immunoglobulin complex"/>
    <property type="evidence" value="ECO:0007669"/>
    <property type="project" value="UniProtKB-KW"/>
</dbReference>
<dbReference type="GO" id="GO:0002250">
    <property type="term" value="P:adaptive immune response"/>
    <property type="evidence" value="ECO:0007669"/>
    <property type="project" value="UniProtKB-KW"/>
</dbReference>
<dbReference type="FunFam" id="2.60.40.10:FF:001878">
    <property type="entry name" value="Immunoglobulin heavy variable 1-4"/>
    <property type="match status" value="1"/>
</dbReference>
<dbReference type="Gene3D" id="2.60.40.10">
    <property type="entry name" value="Immunoglobulins"/>
    <property type="match status" value="1"/>
</dbReference>
<dbReference type="InterPro" id="IPR007110">
    <property type="entry name" value="Ig-like_dom"/>
</dbReference>
<dbReference type="InterPro" id="IPR036179">
    <property type="entry name" value="Ig-like_dom_sf"/>
</dbReference>
<dbReference type="InterPro" id="IPR013783">
    <property type="entry name" value="Ig-like_fold"/>
</dbReference>
<dbReference type="InterPro" id="IPR003599">
    <property type="entry name" value="Ig_sub"/>
</dbReference>
<dbReference type="InterPro" id="IPR013106">
    <property type="entry name" value="Ig_V-set"/>
</dbReference>
<dbReference type="InterPro" id="IPR050199">
    <property type="entry name" value="IgHV"/>
</dbReference>
<dbReference type="PANTHER" id="PTHR23266">
    <property type="entry name" value="IMMUNOGLOBULIN HEAVY CHAIN"/>
    <property type="match status" value="1"/>
</dbReference>
<dbReference type="Pfam" id="PF07686">
    <property type="entry name" value="V-set"/>
    <property type="match status" value="1"/>
</dbReference>
<dbReference type="SMART" id="SM00409">
    <property type="entry name" value="IG"/>
    <property type="match status" value="1"/>
</dbReference>
<dbReference type="SMART" id="SM00406">
    <property type="entry name" value="IGv"/>
    <property type="match status" value="1"/>
</dbReference>
<dbReference type="SUPFAM" id="SSF48726">
    <property type="entry name" value="Immunoglobulin"/>
    <property type="match status" value="1"/>
</dbReference>
<dbReference type="PROSITE" id="PS50835">
    <property type="entry name" value="IG_LIKE"/>
    <property type="match status" value="1"/>
</dbReference>
<sequence>NIVLTQPESAVKKPGESHKLSCTVSGFDVNGHHMNWVKQVPGEGLEWLLSYRKTYNTYYASGIQGRITFSTESSTTFIEIPNLRVEDTAMYYCARGTGFPQWGYWGSGTFLTVTSVTQ</sequence>
<protein>
    <recommendedName>
        <fullName>IgW heavy chain V region W26</fullName>
    </recommendedName>
</protein>
<organism>
    <name type="scientific">Heterodontus francisci</name>
    <name type="common">Horn shark</name>
    <name type="synonym">Cestracion francisci</name>
    <dbReference type="NCBI Taxonomy" id="7792"/>
    <lineage>
        <taxon>Eukaryota</taxon>
        <taxon>Metazoa</taxon>
        <taxon>Chordata</taxon>
        <taxon>Craniata</taxon>
        <taxon>Vertebrata</taxon>
        <taxon>Chondrichthyes</taxon>
        <taxon>Elasmobranchii</taxon>
        <taxon>Galeomorphii</taxon>
        <taxon>Heterodontoidea</taxon>
        <taxon>Heterodontiformes</taxon>
        <taxon>Heterodontidae</taxon>
        <taxon>Heterodontus</taxon>
    </lineage>
</organism>
<feature type="chain" id="PRO_0000059865" description="IgW heavy chain V region W26">
    <location>
        <begin position="1" status="less than"/>
        <end position="118" status="greater than"/>
    </location>
</feature>
<feature type="domain" description="Ig-like" evidence="2">
    <location>
        <begin position="1" status="less than"/>
        <end position="109"/>
    </location>
</feature>
<feature type="disulfide bond" evidence="1 3">
    <location>
        <begin position="22"/>
        <end position="93"/>
    </location>
</feature>
<feature type="non-terminal residue" evidence="6">
    <location>
        <position position="1"/>
    </location>
</feature>
<feature type="non-terminal residue" evidence="6">
    <location>
        <position position="118"/>
    </location>
</feature>
<keyword id="KW-1064">Adaptive immunity</keyword>
<keyword id="KW-1015">Disulfide bond</keyword>
<keyword id="KW-0391">Immunity</keyword>
<keyword id="KW-1280">Immunoglobulin</keyword>